<keyword id="KW-0028">Amino-acid biosynthesis</keyword>
<keyword id="KW-0067">ATP-binding</keyword>
<keyword id="KW-0963">Cytoplasm</keyword>
<keyword id="KW-0418">Kinase</keyword>
<keyword id="KW-0547">Nucleotide-binding</keyword>
<keyword id="KW-0641">Proline biosynthesis</keyword>
<keyword id="KW-0808">Transferase</keyword>
<name>PROB_SYNJA</name>
<sequence length="371" mass="39542">MAATEGTVVVKIGTSSLTDMQTGSLRLSVLGPLVEVLTRLRSQGYAVILVSSGAVGIGCARLGLRQRPTAIAEKQAVAAVGQGRLIRLYDDLFSALNQPIAQVLLTRGDFVERSRYVNANRTFTQLLQMGVIPIVNENDTVAVEELKFGDNDSLSALVASMVQAKWLILLTDVDRLYSADPHRDPSAEPIERVWRGMPLQIKAEAHGNSGWGTGGMATKLAAAQIATAAGVTVVITNGKRPDQIPAILAGEPIGTRFEPAPQPVSARKRWIAYGLIPEGSLTLDEGAVRAICEQGRSLLPAGITDVSGDFEAGAAVRLCDPGGREVGRGLVNYSAEELRRIKGKKTAEIPYILGYEGVDTAVHRDNLALLD</sequence>
<protein>
    <recommendedName>
        <fullName evidence="1">Glutamate 5-kinase</fullName>
        <ecNumber evidence="1">2.7.2.11</ecNumber>
    </recommendedName>
    <alternativeName>
        <fullName evidence="1">Gamma-glutamyl kinase</fullName>
        <shortName evidence="1">GK</shortName>
    </alternativeName>
</protein>
<proteinExistence type="inferred from homology"/>
<gene>
    <name evidence="1" type="primary">proB</name>
    <name type="ordered locus">CYA_2177</name>
</gene>
<comment type="function">
    <text evidence="1">Catalyzes the transfer of a phosphate group to glutamate to form L-glutamate 5-phosphate.</text>
</comment>
<comment type="catalytic activity">
    <reaction evidence="1">
        <text>L-glutamate + ATP = L-glutamyl 5-phosphate + ADP</text>
        <dbReference type="Rhea" id="RHEA:14877"/>
        <dbReference type="ChEBI" id="CHEBI:29985"/>
        <dbReference type="ChEBI" id="CHEBI:30616"/>
        <dbReference type="ChEBI" id="CHEBI:58274"/>
        <dbReference type="ChEBI" id="CHEBI:456216"/>
        <dbReference type="EC" id="2.7.2.11"/>
    </reaction>
</comment>
<comment type="pathway">
    <text evidence="1">Amino-acid biosynthesis; L-proline biosynthesis; L-glutamate 5-semialdehyde from L-glutamate: step 1/2.</text>
</comment>
<comment type="subcellular location">
    <subcellularLocation>
        <location evidence="1">Cytoplasm</location>
    </subcellularLocation>
</comment>
<comment type="similarity">
    <text evidence="1">Belongs to the glutamate 5-kinase family.</text>
</comment>
<evidence type="ECO:0000255" key="1">
    <source>
        <dbReference type="HAMAP-Rule" id="MF_00456"/>
    </source>
</evidence>
<reference key="1">
    <citation type="journal article" date="2007" name="ISME J.">
        <title>Population level functional diversity in a microbial community revealed by comparative genomic and metagenomic analyses.</title>
        <authorList>
            <person name="Bhaya D."/>
            <person name="Grossman A.R."/>
            <person name="Steunou A.-S."/>
            <person name="Khuri N."/>
            <person name="Cohan F.M."/>
            <person name="Hamamura N."/>
            <person name="Melendrez M.C."/>
            <person name="Bateson M.M."/>
            <person name="Ward D.M."/>
            <person name="Heidelberg J.F."/>
        </authorList>
    </citation>
    <scope>NUCLEOTIDE SEQUENCE [LARGE SCALE GENOMIC DNA]</scope>
    <source>
        <strain>JA-3-3Ab</strain>
    </source>
</reference>
<feature type="chain" id="PRO_0000253011" description="Glutamate 5-kinase">
    <location>
        <begin position="1"/>
        <end position="371"/>
    </location>
</feature>
<feature type="domain" description="PUA" evidence="1">
    <location>
        <begin position="278"/>
        <end position="356"/>
    </location>
</feature>
<feature type="binding site" evidence="1">
    <location>
        <position position="11"/>
    </location>
    <ligand>
        <name>ATP</name>
        <dbReference type="ChEBI" id="CHEBI:30616"/>
    </ligand>
</feature>
<feature type="binding site" evidence="1">
    <location>
        <position position="52"/>
    </location>
    <ligand>
        <name>substrate</name>
    </ligand>
</feature>
<feature type="binding site" evidence="1">
    <location>
        <position position="139"/>
    </location>
    <ligand>
        <name>substrate</name>
    </ligand>
</feature>
<feature type="binding site" evidence="1">
    <location>
        <position position="151"/>
    </location>
    <ligand>
        <name>substrate</name>
    </ligand>
</feature>
<feature type="binding site" evidence="1">
    <location>
        <begin position="171"/>
        <end position="172"/>
    </location>
    <ligand>
        <name>ATP</name>
        <dbReference type="ChEBI" id="CHEBI:30616"/>
    </ligand>
</feature>
<feature type="binding site" evidence="1">
    <location>
        <begin position="213"/>
        <end position="219"/>
    </location>
    <ligand>
        <name>ATP</name>
        <dbReference type="ChEBI" id="CHEBI:30616"/>
    </ligand>
</feature>
<organism>
    <name type="scientific">Synechococcus sp. (strain JA-3-3Ab)</name>
    <name type="common">Cyanobacteria bacterium Yellowstone A-Prime</name>
    <dbReference type="NCBI Taxonomy" id="321327"/>
    <lineage>
        <taxon>Bacteria</taxon>
        <taxon>Bacillati</taxon>
        <taxon>Cyanobacteriota</taxon>
        <taxon>Cyanophyceae</taxon>
        <taxon>Synechococcales</taxon>
        <taxon>Synechococcaceae</taxon>
        <taxon>Synechococcus</taxon>
    </lineage>
</organism>
<dbReference type="EC" id="2.7.2.11" evidence="1"/>
<dbReference type="EMBL" id="CP000239">
    <property type="protein sequence ID" value="ABD00317.1"/>
    <property type="molecule type" value="Genomic_DNA"/>
</dbReference>
<dbReference type="RefSeq" id="WP_011430991.1">
    <property type="nucleotide sequence ID" value="NC_007775.1"/>
</dbReference>
<dbReference type="SMR" id="Q2JSQ2"/>
<dbReference type="STRING" id="321327.CYA_2177"/>
<dbReference type="KEGG" id="cya:CYA_2177"/>
<dbReference type="eggNOG" id="COG0263">
    <property type="taxonomic scope" value="Bacteria"/>
</dbReference>
<dbReference type="HOGENOM" id="CLU_025400_2_0_3"/>
<dbReference type="OrthoDB" id="9804434at2"/>
<dbReference type="UniPathway" id="UPA00098">
    <property type="reaction ID" value="UER00359"/>
</dbReference>
<dbReference type="Proteomes" id="UP000008818">
    <property type="component" value="Chromosome"/>
</dbReference>
<dbReference type="GO" id="GO:0005829">
    <property type="term" value="C:cytosol"/>
    <property type="evidence" value="ECO:0007669"/>
    <property type="project" value="TreeGrafter"/>
</dbReference>
<dbReference type="GO" id="GO:0005524">
    <property type="term" value="F:ATP binding"/>
    <property type="evidence" value="ECO:0007669"/>
    <property type="project" value="UniProtKB-KW"/>
</dbReference>
<dbReference type="GO" id="GO:0004349">
    <property type="term" value="F:glutamate 5-kinase activity"/>
    <property type="evidence" value="ECO:0007669"/>
    <property type="project" value="UniProtKB-UniRule"/>
</dbReference>
<dbReference type="GO" id="GO:0003723">
    <property type="term" value="F:RNA binding"/>
    <property type="evidence" value="ECO:0007669"/>
    <property type="project" value="InterPro"/>
</dbReference>
<dbReference type="GO" id="GO:0055129">
    <property type="term" value="P:L-proline biosynthetic process"/>
    <property type="evidence" value="ECO:0007669"/>
    <property type="project" value="UniProtKB-UniRule"/>
</dbReference>
<dbReference type="CDD" id="cd04242">
    <property type="entry name" value="AAK_G5K_ProB"/>
    <property type="match status" value="1"/>
</dbReference>
<dbReference type="CDD" id="cd21157">
    <property type="entry name" value="PUA_G5K"/>
    <property type="match status" value="1"/>
</dbReference>
<dbReference type="FunFam" id="2.30.130.10:FF:000007">
    <property type="entry name" value="Glutamate 5-kinase"/>
    <property type="match status" value="1"/>
</dbReference>
<dbReference type="FunFam" id="3.40.1160.10:FF:000018">
    <property type="entry name" value="Glutamate 5-kinase"/>
    <property type="match status" value="1"/>
</dbReference>
<dbReference type="Gene3D" id="3.40.1160.10">
    <property type="entry name" value="Acetylglutamate kinase-like"/>
    <property type="match status" value="2"/>
</dbReference>
<dbReference type="Gene3D" id="2.30.130.10">
    <property type="entry name" value="PUA domain"/>
    <property type="match status" value="1"/>
</dbReference>
<dbReference type="HAMAP" id="MF_00456">
    <property type="entry name" value="ProB"/>
    <property type="match status" value="1"/>
</dbReference>
<dbReference type="InterPro" id="IPR036393">
    <property type="entry name" value="AceGlu_kinase-like_sf"/>
</dbReference>
<dbReference type="InterPro" id="IPR001048">
    <property type="entry name" value="Asp/Glu/Uridylate_kinase"/>
</dbReference>
<dbReference type="InterPro" id="IPR041739">
    <property type="entry name" value="G5K_ProB"/>
</dbReference>
<dbReference type="InterPro" id="IPR001057">
    <property type="entry name" value="Glu/AcGlu_kinase"/>
</dbReference>
<dbReference type="InterPro" id="IPR011529">
    <property type="entry name" value="Glu_5kinase"/>
</dbReference>
<dbReference type="InterPro" id="IPR005715">
    <property type="entry name" value="Glu_5kinase/COase_Synthase"/>
</dbReference>
<dbReference type="InterPro" id="IPR019797">
    <property type="entry name" value="Glutamate_5-kinase_CS"/>
</dbReference>
<dbReference type="InterPro" id="IPR002478">
    <property type="entry name" value="PUA"/>
</dbReference>
<dbReference type="InterPro" id="IPR015947">
    <property type="entry name" value="PUA-like_sf"/>
</dbReference>
<dbReference type="InterPro" id="IPR036974">
    <property type="entry name" value="PUA_sf"/>
</dbReference>
<dbReference type="NCBIfam" id="TIGR01027">
    <property type="entry name" value="proB"/>
    <property type="match status" value="1"/>
</dbReference>
<dbReference type="PANTHER" id="PTHR43654">
    <property type="entry name" value="GLUTAMATE 5-KINASE"/>
    <property type="match status" value="1"/>
</dbReference>
<dbReference type="PANTHER" id="PTHR43654:SF3">
    <property type="entry name" value="GLUTAMATE 5-KINASE"/>
    <property type="match status" value="1"/>
</dbReference>
<dbReference type="Pfam" id="PF00696">
    <property type="entry name" value="AA_kinase"/>
    <property type="match status" value="1"/>
</dbReference>
<dbReference type="Pfam" id="PF01472">
    <property type="entry name" value="PUA"/>
    <property type="match status" value="1"/>
</dbReference>
<dbReference type="PIRSF" id="PIRSF000729">
    <property type="entry name" value="GK"/>
    <property type="match status" value="1"/>
</dbReference>
<dbReference type="PRINTS" id="PR00474">
    <property type="entry name" value="GLU5KINASE"/>
</dbReference>
<dbReference type="SMART" id="SM00359">
    <property type="entry name" value="PUA"/>
    <property type="match status" value="1"/>
</dbReference>
<dbReference type="SUPFAM" id="SSF53633">
    <property type="entry name" value="Carbamate kinase-like"/>
    <property type="match status" value="1"/>
</dbReference>
<dbReference type="SUPFAM" id="SSF88697">
    <property type="entry name" value="PUA domain-like"/>
    <property type="match status" value="1"/>
</dbReference>
<dbReference type="PROSITE" id="PS00902">
    <property type="entry name" value="GLUTAMATE_5_KINASE"/>
    <property type="match status" value="1"/>
</dbReference>
<dbReference type="PROSITE" id="PS50890">
    <property type="entry name" value="PUA"/>
    <property type="match status" value="1"/>
</dbReference>
<accession>Q2JSQ2</accession>